<comment type="function">
    <text evidence="1">Small subunit of the glutamine-dependent carbamoyl phosphate synthetase (CPSase). CPSase catalyzes the formation of carbamoyl phosphate from the ammonia moiety of glutamine, carbonate, and phosphate donated by ATP, constituting the first step of 2 biosynthetic pathways, one leading to arginine and/or urea and the other to pyrimidine nucleotides. The small subunit (glutamine amidotransferase) binds and cleaves glutamine to supply the large subunit with the substrate ammonia.</text>
</comment>
<comment type="catalytic activity">
    <reaction evidence="1">
        <text>hydrogencarbonate + L-glutamine + 2 ATP + H2O = carbamoyl phosphate + L-glutamate + 2 ADP + phosphate + 2 H(+)</text>
        <dbReference type="Rhea" id="RHEA:18633"/>
        <dbReference type="ChEBI" id="CHEBI:15377"/>
        <dbReference type="ChEBI" id="CHEBI:15378"/>
        <dbReference type="ChEBI" id="CHEBI:17544"/>
        <dbReference type="ChEBI" id="CHEBI:29985"/>
        <dbReference type="ChEBI" id="CHEBI:30616"/>
        <dbReference type="ChEBI" id="CHEBI:43474"/>
        <dbReference type="ChEBI" id="CHEBI:58228"/>
        <dbReference type="ChEBI" id="CHEBI:58359"/>
        <dbReference type="ChEBI" id="CHEBI:456216"/>
        <dbReference type="EC" id="6.3.5.5"/>
    </reaction>
</comment>
<comment type="catalytic activity">
    <molecule>Carbamoyl phosphate synthase small chain</molecule>
    <reaction evidence="1">
        <text>L-glutamine + H2O = L-glutamate + NH4(+)</text>
        <dbReference type="Rhea" id="RHEA:15889"/>
        <dbReference type="ChEBI" id="CHEBI:15377"/>
        <dbReference type="ChEBI" id="CHEBI:28938"/>
        <dbReference type="ChEBI" id="CHEBI:29985"/>
        <dbReference type="ChEBI" id="CHEBI:58359"/>
    </reaction>
</comment>
<comment type="pathway">
    <text evidence="1">Amino-acid biosynthesis; L-arginine biosynthesis; carbamoyl phosphate from bicarbonate: step 1/1.</text>
</comment>
<comment type="pathway">
    <text evidence="1">Pyrimidine metabolism; UMP biosynthesis via de novo pathway; (S)-dihydroorotate from bicarbonate: step 1/3.</text>
</comment>
<comment type="subunit">
    <text evidence="1">Composed of two chains; the small (or glutamine) chain promotes the hydrolysis of glutamine to ammonia, which is used by the large (or ammonia) chain to synthesize carbamoyl phosphate. Tetramer of heterodimers (alpha,beta)4.</text>
</comment>
<comment type="similarity">
    <text evidence="1">Belongs to the CarA family.</text>
</comment>
<proteinExistence type="inferred from homology"/>
<protein>
    <recommendedName>
        <fullName evidence="1">Carbamoyl phosphate synthase small chain</fullName>
        <ecNumber evidence="1">6.3.5.5</ecNumber>
    </recommendedName>
    <alternativeName>
        <fullName evidence="1">Carbamoyl phosphate synthetase glutamine chain</fullName>
    </alternativeName>
</protein>
<gene>
    <name evidence="1" type="primary">carA</name>
    <name type="ordered locus">BOV_1439</name>
</gene>
<organism>
    <name type="scientific">Brucella ovis (strain ATCC 25840 / 63/290 / NCTC 10512)</name>
    <dbReference type="NCBI Taxonomy" id="444178"/>
    <lineage>
        <taxon>Bacteria</taxon>
        <taxon>Pseudomonadati</taxon>
        <taxon>Pseudomonadota</taxon>
        <taxon>Alphaproteobacteria</taxon>
        <taxon>Hyphomicrobiales</taxon>
        <taxon>Brucellaceae</taxon>
        <taxon>Brucella/Ochrobactrum group</taxon>
        <taxon>Brucella</taxon>
    </lineage>
</organism>
<reference key="1">
    <citation type="journal article" date="2009" name="PLoS ONE">
        <title>Genome degradation in Brucella ovis corresponds with narrowing of its host range and tissue tropism.</title>
        <authorList>
            <person name="Tsolis R.M."/>
            <person name="Seshadri R."/>
            <person name="Santos R.L."/>
            <person name="Sangari F.J."/>
            <person name="Lobo J.M."/>
            <person name="de Jong M.F."/>
            <person name="Ren Q."/>
            <person name="Myers G."/>
            <person name="Brinkac L.M."/>
            <person name="Nelson W.C."/>
            <person name="Deboy R.T."/>
            <person name="Angiuoli S."/>
            <person name="Khouri H."/>
            <person name="Dimitrov G."/>
            <person name="Robinson J.R."/>
            <person name="Mulligan S."/>
            <person name="Walker R.L."/>
            <person name="Elzer P.E."/>
            <person name="Hassan K.A."/>
            <person name="Paulsen I.T."/>
        </authorList>
    </citation>
    <scope>NUCLEOTIDE SEQUENCE [LARGE SCALE GENOMIC DNA]</scope>
    <source>
        <strain>ATCC 25840 / 63/290 / NCTC 10512</strain>
    </source>
</reference>
<dbReference type="EC" id="6.3.5.5" evidence="1"/>
<dbReference type="EMBL" id="CP000708">
    <property type="protein sequence ID" value="ABQ61674.1"/>
    <property type="molecule type" value="Genomic_DNA"/>
</dbReference>
<dbReference type="RefSeq" id="WP_002964590.1">
    <property type="nucleotide sequence ID" value="NC_009505.1"/>
</dbReference>
<dbReference type="SMR" id="A5VRM1"/>
<dbReference type="GeneID" id="93016227"/>
<dbReference type="KEGG" id="bov:BOV_1439"/>
<dbReference type="HOGENOM" id="CLU_035901_2_2_5"/>
<dbReference type="UniPathway" id="UPA00068">
    <property type="reaction ID" value="UER00171"/>
</dbReference>
<dbReference type="UniPathway" id="UPA00070">
    <property type="reaction ID" value="UER00115"/>
</dbReference>
<dbReference type="Proteomes" id="UP000006383">
    <property type="component" value="Chromosome I"/>
</dbReference>
<dbReference type="GO" id="GO:0005524">
    <property type="term" value="F:ATP binding"/>
    <property type="evidence" value="ECO:0007669"/>
    <property type="project" value="UniProtKB-UniRule"/>
</dbReference>
<dbReference type="GO" id="GO:0004088">
    <property type="term" value="F:carbamoyl-phosphate synthase (glutamine-hydrolyzing) activity"/>
    <property type="evidence" value="ECO:0007669"/>
    <property type="project" value="UniProtKB-UniRule"/>
</dbReference>
<dbReference type="GO" id="GO:0004359">
    <property type="term" value="F:glutaminase activity"/>
    <property type="evidence" value="ECO:0007669"/>
    <property type="project" value="RHEA"/>
</dbReference>
<dbReference type="GO" id="GO:0006207">
    <property type="term" value="P:'de novo' pyrimidine nucleobase biosynthetic process"/>
    <property type="evidence" value="ECO:0007669"/>
    <property type="project" value="InterPro"/>
</dbReference>
<dbReference type="GO" id="GO:0044205">
    <property type="term" value="P:'de novo' UMP biosynthetic process"/>
    <property type="evidence" value="ECO:0007669"/>
    <property type="project" value="UniProtKB-UniRule"/>
</dbReference>
<dbReference type="GO" id="GO:0006541">
    <property type="term" value="P:glutamine metabolic process"/>
    <property type="evidence" value="ECO:0007669"/>
    <property type="project" value="InterPro"/>
</dbReference>
<dbReference type="GO" id="GO:0006526">
    <property type="term" value="P:L-arginine biosynthetic process"/>
    <property type="evidence" value="ECO:0007669"/>
    <property type="project" value="UniProtKB-UniRule"/>
</dbReference>
<dbReference type="CDD" id="cd01744">
    <property type="entry name" value="GATase1_CPSase"/>
    <property type="match status" value="1"/>
</dbReference>
<dbReference type="FunFam" id="3.50.30.20:FF:000001">
    <property type="entry name" value="Carbamoyl-phosphate synthase small chain"/>
    <property type="match status" value="1"/>
</dbReference>
<dbReference type="Gene3D" id="3.40.50.880">
    <property type="match status" value="1"/>
</dbReference>
<dbReference type="Gene3D" id="3.50.30.20">
    <property type="entry name" value="Carbamoyl-phosphate synthase small subunit, N-terminal domain"/>
    <property type="match status" value="1"/>
</dbReference>
<dbReference type="HAMAP" id="MF_01209">
    <property type="entry name" value="CPSase_S_chain"/>
    <property type="match status" value="1"/>
</dbReference>
<dbReference type="InterPro" id="IPR050472">
    <property type="entry name" value="Anth_synth/Amidotransfase"/>
</dbReference>
<dbReference type="InterPro" id="IPR006274">
    <property type="entry name" value="CarbamoylP_synth_ssu"/>
</dbReference>
<dbReference type="InterPro" id="IPR002474">
    <property type="entry name" value="CarbamoylP_synth_ssu_N"/>
</dbReference>
<dbReference type="InterPro" id="IPR036480">
    <property type="entry name" value="CarbP_synth_ssu_N_sf"/>
</dbReference>
<dbReference type="InterPro" id="IPR029062">
    <property type="entry name" value="Class_I_gatase-like"/>
</dbReference>
<dbReference type="InterPro" id="IPR035686">
    <property type="entry name" value="CPSase_GATase1"/>
</dbReference>
<dbReference type="InterPro" id="IPR017926">
    <property type="entry name" value="GATASE"/>
</dbReference>
<dbReference type="NCBIfam" id="TIGR01368">
    <property type="entry name" value="CPSaseIIsmall"/>
    <property type="match status" value="1"/>
</dbReference>
<dbReference type="NCBIfam" id="NF009475">
    <property type="entry name" value="PRK12838.1"/>
    <property type="match status" value="1"/>
</dbReference>
<dbReference type="PANTHER" id="PTHR43418:SF7">
    <property type="entry name" value="CARBAMOYL-PHOSPHATE SYNTHASE SMALL CHAIN"/>
    <property type="match status" value="1"/>
</dbReference>
<dbReference type="PANTHER" id="PTHR43418">
    <property type="entry name" value="MULTIFUNCTIONAL TRYPTOPHAN BIOSYNTHESIS PROTEIN-RELATED"/>
    <property type="match status" value="1"/>
</dbReference>
<dbReference type="Pfam" id="PF00988">
    <property type="entry name" value="CPSase_sm_chain"/>
    <property type="match status" value="1"/>
</dbReference>
<dbReference type="Pfam" id="PF00117">
    <property type="entry name" value="GATase"/>
    <property type="match status" value="1"/>
</dbReference>
<dbReference type="PRINTS" id="PR00097">
    <property type="entry name" value="ANTSNTHASEII"/>
</dbReference>
<dbReference type="PRINTS" id="PR00099">
    <property type="entry name" value="CPSGATASE"/>
</dbReference>
<dbReference type="PRINTS" id="PR00096">
    <property type="entry name" value="GATASE"/>
</dbReference>
<dbReference type="SMART" id="SM01097">
    <property type="entry name" value="CPSase_sm_chain"/>
    <property type="match status" value="1"/>
</dbReference>
<dbReference type="SUPFAM" id="SSF52021">
    <property type="entry name" value="Carbamoyl phosphate synthetase, small subunit N-terminal domain"/>
    <property type="match status" value="1"/>
</dbReference>
<dbReference type="SUPFAM" id="SSF52317">
    <property type="entry name" value="Class I glutamine amidotransferase-like"/>
    <property type="match status" value="1"/>
</dbReference>
<dbReference type="PROSITE" id="PS51273">
    <property type="entry name" value="GATASE_TYPE_1"/>
    <property type="match status" value="1"/>
</dbReference>
<accession>A5VRM1</accession>
<feature type="chain" id="PRO_1000138856" description="Carbamoyl phosphate synthase small chain">
    <location>
        <begin position="1"/>
        <end position="407"/>
    </location>
</feature>
<feature type="domain" description="Glutamine amidotransferase type-1" evidence="1">
    <location>
        <begin position="209"/>
        <end position="397"/>
    </location>
</feature>
<feature type="region of interest" description="CPSase" evidence="1">
    <location>
        <begin position="1"/>
        <end position="205"/>
    </location>
</feature>
<feature type="active site" description="Nucleophile" evidence="1">
    <location>
        <position position="286"/>
    </location>
</feature>
<feature type="active site" evidence="1">
    <location>
        <position position="370"/>
    </location>
</feature>
<feature type="active site" evidence="1">
    <location>
        <position position="372"/>
    </location>
</feature>
<feature type="binding site" evidence="1">
    <location>
        <position position="60"/>
    </location>
    <ligand>
        <name>L-glutamine</name>
        <dbReference type="ChEBI" id="CHEBI:58359"/>
    </ligand>
</feature>
<feature type="binding site" evidence="1">
    <location>
        <position position="257"/>
    </location>
    <ligand>
        <name>L-glutamine</name>
        <dbReference type="ChEBI" id="CHEBI:58359"/>
    </ligand>
</feature>
<feature type="binding site" evidence="1">
    <location>
        <position position="259"/>
    </location>
    <ligand>
        <name>L-glutamine</name>
        <dbReference type="ChEBI" id="CHEBI:58359"/>
    </ligand>
</feature>
<feature type="binding site" evidence="1">
    <location>
        <position position="287"/>
    </location>
    <ligand>
        <name>L-glutamine</name>
        <dbReference type="ChEBI" id="CHEBI:58359"/>
    </ligand>
</feature>
<feature type="binding site" evidence="1">
    <location>
        <position position="290"/>
    </location>
    <ligand>
        <name>L-glutamine</name>
        <dbReference type="ChEBI" id="CHEBI:58359"/>
    </ligand>
</feature>
<feature type="binding site" evidence="1">
    <location>
        <position position="328"/>
    </location>
    <ligand>
        <name>L-glutamine</name>
        <dbReference type="ChEBI" id="CHEBI:58359"/>
    </ligand>
</feature>
<feature type="binding site" evidence="1">
    <location>
        <position position="330"/>
    </location>
    <ligand>
        <name>L-glutamine</name>
        <dbReference type="ChEBI" id="CHEBI:58359"/>
    </ligand>
</feature>
<feature type="binding site" evidence="1">
    <location>
        <position position="331"/>
    </location>
    <ligand>
        <name>L-glutamine</name>
        <dbReference type="ChEBI" id="CHEBI:58359"/>
    </ligand>
</feature>
<evidence type="ECO:0000255" key="1">
    <source>
        <dbReference type="HAMAP-Rule" id="MF_01209"/>
    </source>
</evidence>
<sequence length="407" mass="43536">MTETTPKTAPWTVQKRTAVLVLADGTVIEGKGLGATGAVEAEVVFNTALTGYEEILTDPSYAGQIVTFTFPHIGNVGANAEDIEDLTPANRHGAVGAIFKADITAPSNFRAAKDLDSWLKHRGIIALAGIDTRALTALIRERGAQNAVIAHDPNGNFDLDALKARAANWCGLENLDLAKDVTIGQSLVWKELPWTLQDGYGEQDAPQYHVVALDFGVKRNILRLLTGLGAKVTVLPATATAEDVLAHNPDGVFLSNGPGDPAATGEYAVPTIGKLVETGIPLFGICLGHQMLALALGGRTEKMHQGHHGANHPVKDYTTGKVEIVSMNHGFAVDSDSLPENVEETHVSLFDGTNCGLRVVGKPVFSVQHHPEASPGPQDSHYLFRRFINLIRERKGQAPLPEREQAA</sequence>
<keyword id="KW-0028">Amino-acid biosynthesis</keyword>
<keyword id="KW-0055">Arginine biosynthesis</keyword>
<keyword id="KW-0067">ATP-binding</keyword>
<keyword id="KW-0315">Glutamine amidotransferase</keyword>
<keyword id="KW-0436">Ligase</keyword>
<keyword id="KW-0547">Nucleotide-binding</keyword>
<keyword id="KW-0665">Pyrimidine biosynthesis</keyword>
<name>CARA_BRUO2</name>